<feature type="chain" id="PRO_0000452769" description="Small polypeptide DEVIL 1">
    <location>
        <begin position="1"/>
        <end position="51"/>
    </location>
</feature>
<feature type="transmembrane region" description="Helical" evidence="2">
    <location>
        <begin position="28"/>
        <end position="44"/>
    </location>
</feature>
<feature type="region of interest" description="Disordered" evidence="3">
    <location>
        <begin position="1"/>
        <end position="25"/>
    </location>
</feature>
<feature type="region of interest" description="Required for DVL/RTFL small polypeptide activity" evidence="1">
    <location>
        <begin position="20"/>
        <end position="51"/>
    </location>
</feature>
<feature type="compositionally biased region" description="Basic residues" evidence="3">
    <location>
        <begin position="16"/>
        <end position="25"/>
    </location>
</feature>
<feature type="mutagenesis site" description="Impaired developmental regulatory activity." evidence="4">
    <original>R</original>
    <variation>E</variation>
    <location>
        <position position="23"/>
    </location>
</feature>
<feature type="mutagenesis site" description="Impaired developmental regulatory activity." evidence="4">
    <original>Y</original>
    <variation>N</variation>
    <location>
        <position position="37"/>
    </location>
</feature>
<feature type="mutagenesis site" description="Impaired developmental regulatory activity." evidence="4">
    <original>I</original>
    <variation>S</variation>
    <location>
        <position position="38"/>
    </location>
</feature>
<feature type="mutagenesis site" description="Impaired developmental regulatory activity." evidence="4">
    <original>C</original>
    <variation>S</variation>
    <location>
        <position position="42"/>
    </location>
</feature>
<feature type="mutagenesis site" description="Impaired developmental regulatory activity." evidence="4">
    <original>L</original>
    <variation>H</variation>
    <location>
        <position position="46"/>
    </location>
</feature>
<gene>
    <name evidence="6" type="primary">DVL1</name>
    <name evidence="7" type="synonym">RTFL18</name>
    <name evidence="9" type="ordered locus">At5g16023</name>
    <name evidence="10" type="ORF">F1N13</name>
</gene>
<dbReference type="EMBL" id="AY254203">
    <property type="protein sequence ID" value="AAP13816.1"/>
    <property type="molecule type" value="mRNA"/>
</dbReference>
<dbReference type="EMBL" id="AL391145">
    <property type="status" value="NOT_ANNOTATED_CDS"/>
    <property type="molecule type" value="Genomic_DNA"/>
</dbReference>
<dbReference type="EMBL" id="CP002688">
    <property type="protein sequence ID" value="AED92236.1"/>
    <property type="molecule type" value="Genomic_DNA"/>
</dbReference>
<dbReference type="RefSeq" id="NP_001318571.1">
    <property type="nucleotide sequence ID" value="NM_001343431.1"/>
</dbReference>
<dbReference type="STRING" id="3702.Q6X5V0"/>
<dbReference type="PaxDb" id="3702-AT5G16023.1"/>
<dbReference type="EnsemblPlants" id="AT5G16023.1">
    <property type="protein sequence ID" value="AT5G16023.1"/>
    <property type="gene ID" value="AT5G16023"/>
</dbReference>
<dbReference type="GeneID" id="28721166"/>
<dbReference type="Gramene" id="AT5G16023.1">
    <property type="protein sequence ID" value="AT5G16023.1"/>
    <property type="gene ID" value="AT5G16023"/>
</dbReference>
<dbReference type="KEGG" id="ath:AT5G16023"/>
<dbReference type="Araport" id="AT5G16023"/>
<dbReference type="TAIR" id="AT5G16023">
    <property type="gene designation" value="RTFL18"/>
</dbReference>
<dbReference type="HOGENOM" id="CLU_150897_5_1_1"/>
<dbReference type="InParanoid" id="Q6X5V0"/>
<dbReference type="OMA" id="MEMKRVM"/>
<dbReference type="PhylomeDB" id="Q6X5V0"/>
<dbReference type="PRO" id="PR:Q6X5V0"/>
<dbReference type="Proteomes" id="UP000006548">
    <property type="component" value="Chromosome 5"/>
</dbReference>
<dbReference type="GO" id="GO:0005886">
    <property type="term" value="C:plasma membrane"/>
    <property type="evidence" value="ECO:0000250"/>
    <property type="project" value="UniProtKB"/>
</dbReference>
<dbReference type="GO" id="GO:0008285">
    <property type="term" value="P:negative regulation of cell population proliferation"/>
    <property type="evidence" value="ECO:0000250"/>
    <property type="project" value="UniProtKB"/>
</dbReference>
<dbReference type="GO" id="GO:0048367">
    <property type="term" value="P:shoot system development"/>
    <property type="evidence" value="ECO:0000315"/>
    <property type="project" value="TAIR"/>
</dbReference>
<dbReference type="GO" id="GO:0090437">
    <property type="term" value="P:socket cell differentiation"/>
    <property type="evidence" value="ECO:0000315"/>
    <property type="project" value="TAIR"/>
</dbReference>
<dbReference type="InterPro" id="IPR012552">
    <property type="entry name" value="DVL"/>
</dbReference>
<dbReference type="InterPro" id="IPR052153">
    <property type="entry name" value="DVL/RTFL_small_peptides"/>
</dbReference>
<dbReference type="PANTHER" id="PTHR47855">
    <property type="entry name" value="OS01G0525701 PROTEIN"/>
    <property type="match status" value="1"/>
</dbReference>
<dbReference type="PANTHER" id="PTHR47855:SF3">
    <property type="entry name" value="SMALL POLYPEPTIDE DEVIL 1-RELATED"/>
    <property type="match status" value="1"/>
</dbReference>
<dbReference type="Pfam" id="PF08137">
    <property type="entry name" value="DVL"/>
    <property type="match status" value="1"/>
</dbReference>
<comment type="function">
    <text evidence="4 5">Small polypeptide acting as a regulatory molecule which coordinates cellular responses required for differentiation, growth and development, including leaves shape, pedicule elongation, inflorescence organization and fruit maturation, probably by restricting polar cell proliferation in lateral organs and coordinating socket cell recruitment and differentiation at trichome sites.</text>
</comment>
<comment type="subcellular location">
    <subcellularLocation>
        <location evidence="1">Cell membrane</location>
        <topology evidence="2">Single-pass membrane protein</topology>
    </subcellularLocation>
</comment>
<comment type="tissue specificity">
    <text evidence="4">Mostly expressed in leaves and, to a lower extent, in roots and stems.</text>
</comment>
<comment type="disruption phenotype">
    <text evidence="4">No visible phenotype (PubMed:14871303). Impaired developmental regulatory activity (PubMed:14871303).</text>
</comment>
<comment type="similarity">
    <text evidence="8">Belongs to the DVL/RTFL small polypeptides family.</text>
</comment>
<keyword id="KW-1003">Cell membrane</keyword>
<keyword id="KW-0217">Developmental protein</keyword>
<keyword id="KW-0472">Membrane</keyword>
<keyword id="KW-1185">Reference proteome</keyword>
<keyword id="KW-0812">Transmembrane</keyword>
<keyword id="KW-1133">Transmembrane helix</keyword>
<sequence>MEMKRVMMSSAERSKEKKRSISRRLGKYMKEQKGRIYIIRRCMVMLLCSHD</sequence>
<protein>
    <recommendedName>
        <fullName evidence="6">Small polypeptide DEVIL 1</fullName>
    </recommendedName>
    <alternativeName>
        <fullName evidence="7">Small polypeptide ROTUNDIFOLIA LIKE 18</fullName>
        <shortName evidence="7">Small polypeptide ROT-FOUR-LIKE 18</shortName>
    </alternativeName>
</protein>
<name>DVL1_ARATH</name>
<proteinExistence type="evidence at protein level"/>
<reference key="1">
    <citation type="journal article" date="2004" name="Plant J.">
        <title>DVL, a novel class of small polypeptides: overexpression alters Arabidopsis development.</title>
        <authorList>
            <person name="Wen J."/>
            <person name="Lease K.A."/>
            <person name="Walker J.C."/>
        </authorList>
    </citation>
    <scope>NUCLEOTIDE SEQUENCE [MRNA]</scope>
    <scope>FUNCTION</scope>
    <scope>MUTAGENESIS OF ARG-23; TYR-37; ILE-38; CYS-42 AND LEU-46</scope>
    <scope>DISRUPTION PHENOTYPE</scope>
    <scope>TISSUE SPECIFICITY</scope>
    <scope>GENE FAMILY</scope>
    <scope>NOMENCLATURE</scope>
    <source>
        <strain>cv. Columbia</strain>
    </source>
</reference>
<reference key="2">
    <citation type="journal article" date="2000" name="Nature">
        <title>Sequence and analysis of chromosome 5 of the plant Arabidopsis thaliana.</title>
        <authorList>
            <person name="Tabata S."/>
            <person name="Kaneko T."/>
            <person name="Nakamura Y."/>
            <person name="Kotani H."/>
            <person name="Kato T."/>
            <person name="Asamizu E."/>
            <person name="Miyajima N."/>
            <person name="Sasamoto S."/>
            <person name="Kimura T."/>
            <person name="Hosouchi T."/>
            <person name="Kawashima K."/>
            <person name="Kohara M."/>
            <person name="Matsumoto M."/>
            <person name="Matsuno A."/>
            <person name="Muraki A."/>
            <person name="Nakayama S."/>
            <person name="Nakazaki N."/>
            <person name="Naruo K."/>
            <person name="Okumura S."/>
            <person name="Shinpo S."/>
            <person name="Takeuchi C."/>
            <person name="Wada T."/>
            <person name="Watanabe A."/>
            <person name="Yamada M."/>
            <person name="Yasuda M."/>
            <person name="Sato S."/>
            <person name="de la Bastide M."/>
            <person name="Huang E."/>
            <person name="Spiegel L."/>
            <person name="Gnoj L."/>
            <person name="O'Shaughnessy A."/>
            <person name="Preston R."/>
            <person name="Habermann K."/>
            <person name="Murray J."/>
            <person name="Johnson D."/>
            <person name="Rohlfing T."/>
            <person name="Nelson J."/>
            <person name="Stoneking T."/>
            <person name="Pepin K."/>
            <person name="Spieth J."/>
            <person name="Sekhon M."/>
            <person name="Armstrong J."/>
            <person name="Becker M."/>
            <person name="Belter E."/>
            <person name="Cordum H."/>
            <person name="Cordes M."/>
            <person name="Courtney L."/>
            <person name="Courtney W."/>
            <person name="Dante M."/>
            <person name="Du H."/>
            <person name="Edwards J."/>
            <person name="Fryman J."/>
            <person name="Haakensen B."/>
            <person name="Lamar E."/>
            <person name="Latreille P."/>
            <person name="Leonard S."/>
            <person name="Meyer R."/>
            <person name="Mulvaney E."/>
            <person name="Ozersky P."/>
            <person name="Riley A."/>
            <person name="Strowmatt C."/>
            <person name="Wagner-McPherson C."/>
            <person name="Wollam A."/>
            <person name="Yoakum M."/>
            <person name="Bell M."/>
            <person name="Dedhia N."/>
            <person name="Parnell L."/>
            <person name="Shah R."/>
            <person name="Rodriguez M."/>
            <person name="Hoon See L."/>
            <person name="Vil D."/>
            <person name="Baker J."/>
            <person name="Kirchoff K."/>
            <person name="Toth K."/>
            <person name="King L."/>
            <person name="Bahret A."/>
            <person name="Miller B."/>
            <person name="Marra M.A."/>
            <person name="Martienssen R."/>
            <person name="McCombie W.R."/>
            <person name="Wilson R.K."/>
            <person name="Murphy G."/>
            <person name="Bancroft I."/>
            <person name="Volckaert G."/>
            <person name="Wambutt R."/>
            <person name="Duesterhoeft A."/>
            <person name="Stiekema W."/>
            <person name="Pohl T."/>
            <person name="Entian K.-D."/>
            <person name="Terryn N."/>
            <person name="Hartley N."/>
            <person name="Bent E."/>
            <person name="Johnson S."/>
            <person name="Langham S.-A."/>
            <person name="McCullagh B."/>
            <person name="Robben J."/>
            <person name="Grymonprez B."/>
            <person name="Zimmermann W."/>
            <person name="Ramsperger U."/>
            <person name="Wedler H."/>
            <person name="Balke K."/>
            <person name="Wedler E."/>
            <person name="Peters S."/>
            <person name="van Staveren M."/>
            <person name="Dirkse W."/>
            <person name="Mooijman P."/>
            <person name="Klein Lankhorst R."/>
            <person name="Weitzenegger T."/>
            <person name="Bothe G."/>
            <person name="Rose M."/>
            <person name="Hauf J."/>
            <person name="Berneiser S."/>
            <person name="Hempel S."/>
            <person name="Feldpausch M."/>
            <person name="Lamberth S."/>
            <person name="Villarroel R."/>
            <person name="Gielen J."/>
            <person name="Ardiles W."/>
            <person name="Bents O."/>
            <person name="Lemcke K."/>
            <person name="Kolesov G."/>
            <person name="Mayer K.F.X."/>
            <person name="Rudd S."/>
            <person name="Schoof H."/>
            <person name="Schueller C."/>
            <person name="Zaccaria P."/>
            <person name="Mewes H.-W."/>
            <person name="Bevan M."/>
            <person name="Fransz P.F."/>
        </authorList>
    </citation>
    <scope>NUCLEOTIDE SEQUENCE [LARGE SCALE GENOMIC DNA]</scope>
    <source>
        <strain>cv. Columbia</strain>
    </source>
</reference>
<reference key="3">
    <citation type="journal article" date="2017" name="Plant J.">
        <title>Araport11: a complete reannotation of the Arabidopsis thaliana reference genome.</title>
        <authorList>
            <person name="Cheng C.Y."/>
            <person name="Krishnakumar V."/>
            <person name="Chan A.P."/>
            <person name="Thibaud-Nissen F."/>
            <person name="Schobel S."/>
            <person name="Town C.D."/>
        </authorList>
    </citation>
    <scope>GENOME REANNOTATION</scope>
    <source>
        <strain>cv. Columbia</strain>
    </source>
</reference>
<reference key="4">
    <citation type="journal article" date="2004" name="Plant J.">
        <title>Overexpression of a novel small peptide ROTUNDIFOLIA4 decreases cell proliferation and alters leaf shape in Arabidopsis thaliana.</title>
        <authorList>
            <person name="Narita N.N."/>
            <person name="Moore S."/>
            <person name="Horiguchi G."/>
            <person name="Kubo M."/>
            <person name="Demura T."/>
            <person name="Fukuda H."/>
            <person name="Goodrich J."/>
            <person name="Tsukaya H."/>
        </authorList>
    </citation>
    <scope>GENE FAMILY</scope>
    <source>
        <strain>cv. Columbia</strain>
        <strain>cv. Landsberg erecta</strain>
    </source>
</reference>
<reference key="5">
    <citation type="journal article" date="2012" name="J. Exp. Bot.">
        <title>DVL genes play a role in the coordination of socket cell recruitment and differentiation.</title>
        <authorList>
            <person name="Valdivia E.R."/>
            <person name="Chevalier D."/>
            <person name="Sampedro J."/>
            <person name="Taylor I."/>
            <person name="Niederhuth C.E."/>
            <person name="Walker J.C."/>
        </authorList>
    </citation>
    <scope>FUNCTION</scope>
    <source>
        <strain>cv. Columbia</strain>
    </source>
</reference>
<reference key="6">
    <citation type="journal article" date="2015" name="J. Plant Res.">
        <title>Comparative analysis of the RTFL peptide family on the control of plant organogenesis.</title>
        <authorList>
            <person name="Guo P."/>
            <person name="Yoshimura A."/>
            <person name="Ishikawa N."/>
            <person name="Yamaguchi T."/>
            <person name="Guo Y."/>
            <person name="Tsukaya H."/>
        </authorList>
    </citation>
    <scope>REVIEW</scope>
    <scope>GENE FAMILY</scope>
    <scope>NOMENCLATURE</scope>
    <source>
        <strain>cv. Columbia</strain>
    </source>
</reference>
<accession>Q6X5V0</accession>
<evidence type="ECO:0000250" key="1">
    <source>
        <dbReference type="UniProtKB" id="Q7XXN8"/>
    </source>
</evidence>
<evidence type="ECO:0000255" key="2"/>
<evidence type="ECO:0000256" key="3">
    <source>
        <dbReference type="SAM" id="MobiDB-lite"/>
    </source>
</evidence>
<evidence type="ECO:0000269" key="4">
    <source>
    </source>
</evidence>
<evidence type="ECO:0000269" key="5">
    <source>
    </source>
</evidence>
<evidence type="ECO:0000303" key="6">
    <source>
    </source>
</evidence>
<evidence type="ECO:0000303" key="7">
    <source>
    </source>
</evidence>
<evidence type="ECO:0000305" key="8"/>
<evidence type="ECO:0000312" key="9">
    <source>
        <dbReference type="Araport" id="AT5G16023"/>
    </source>
</evidence>
<evidence type="ECO:0000312" key="10">
    <source>
        <dbReference type="EMBL" id="AL391145"/>
    </source>
</evidence>
<organism>
    <name type="scientific">Arabidopsis thaliana</name>
    <name type="common">Mouse-ear cress</name>
    <dbReference type="NCBI Taxonomy" id="3702"/>
    <lineage>
        <taxon>Eukaryota</taxon>
        <taxon>Viridiplantae</taxon>
        <taxon>Streptophyta</taxon>
        <taxon>Embryophyta</taxon>
        <taxon>Tracheophyta</taxon>
        <taxon>Spermatophyta</taxon>
        <taxon>Magnoliopsida</taxon>
        <taxon>eudicotyledons</taxon>
        <taxon>Gunneridae</taxon>
        <taxon>Pentapetalae</taxon>
        <taxon>rosids</taxon>
        <taxon>malvids</taxon>
        <taxon>Brassicales</taxon>
        <taxon>Brassicaceae</taxon>
        <taxon>Camelineae</taxon>
        <taxon>Arabidopsis</taxon>
    </lineage>
</organism>